<gene>
    <name type="primary">NOC3</name>
    <name type="ordered locus">YLR002C</name>
</gene>
<protein>
    <recommendedName>
        <fullName>Nucleolar complex-associated protein 3</fullName>
    </recommendedName>
</protein>
<reference key="1">
    <citation type="journal article" date="1997" name="Nature">
        <title>The nucleotide sequence of Saccharomyces cerevisiae chromosome XII.</title>
        <authorList>
            <person name="Johnston M."/>
            <person name="Hillier L.W."/>
            <person name="Riles L."/>
            <person name="Albermann K."/>
            <person name="Andre B."/>
            <person name="Ansorge W."/>
            <person name="Benes V."/>
            <person name="Brueckner M."/>
            <person name="Delius H."/>
            <person name="Dubois E."/>
            <person name="Duesterhoeft A."/>
            <person name="Entian K.-D."/>
            <person name="Floeth M."/>
            <person name="Goffeau A."/>
            <person name="Hebling U."/>
            <person name="Heumann K."/>
            <person name="Heuss-Neitzel D."/>
            <person name="Hilbert H."/>
            <person name="Hilger F."/>
            <person name="Kleine K."/>
            <person name="Koetter P."/>
            <person name="Louis E.J."/>
            <person name="Messenguy F."/>
            <person name="Mewes H.-W."/>
            <person name="Miosga T."/>
            <person name="Moestl D."/>
            <person name="Mueller-Auer S."/>
            <person name="Nentwich U."/>
            <person name="Obermaier B."/>
            <person name="Piravandi E."/>
            <person name="Pohl T.M."/>
            <person name="Portetelle D."/>
            <person name="Purnelle B."/>
            <person name="Rechmann S."/>
            <person name="Rieger M."/>
            <person name="Rinke M."/>
            <person name="Rose M."/>
            <person name="Scharfe M."/>
            <person name="Scherens B."/>
            <person name="Scholler P."/>
            <person name="Schwager C."/>
            <person name="Schwarz S."/>
            <person name="Underwood A.P."/>
            <person name="Urrestarazu L.A."/>
            <person name="Vandenbol M."/>
            <person name="Verhasselt P."/>
            <person name="Vierendeels F."/>
            <person name="Voet M."/>
            <person name="Volckaert G."/>
            <person name="Voss H."/>
            <person name="Wambutt R."/>
            <person name="Wedler E."/>
            <person name="Wedler H."/>
            <person name="Zimmermann F.K."/>
            <person name="Zollner A."/>
            <person name="Hani J."/>
            <person name="Hoheisel J.D."/>
        </authorList>
    </citation>
    <scope>NUCLEOTIDE SEQUENCE [LARGE SCALE GENOMIC DNA]</scope>
    <source>
        <strain>ATCC 204508 / S288c</strain>
    </source>
</reference>
<reference key="2">
    <citation type="journal article" date="2014" name="G3 (Bethesda)">
        <title>The reference genome sequence of Saccharomyces cerevisiae: Then and now.</title>
        <authorList>
            <person name="Engel S.R."/>
            <person name="Dietrich F.S."/>
            <person name="Fisk D.G."/>
            <person name="Binkley G."/>
            <person name="Balakrishnan R."/>
            <person name="Costanzo M.C."/>
            <person name="Dwight S.S."/>
            <person name="Hitz B.C."/>
            <person name="Karra K."/>
            <person name="Nash R.S."/>
            <person name="Weng S."/>
            <person name="Wong E.D."/>
            <person name="Lloyd P."/>
            <person name="Skrzypek M.S."/>
            <person name="Miyasato S.R."/>
            <person name="Simison M."/>
            <person name="Cherry J.M."/>
        </authorList>
    </citation>
    <scope>GENOME REANNOTATION</scope>
    <source>
        <strain>ATCC 204508 / S288c</strain>
    </source>
</reference>
<reference key="3">
    <citation type="journal article" date="1996" name="Yeast">
        <title>Sequence analysis of the CEN12 region of Saccharomyces cerevisiae on a 43.7 kb fragment of chromosome XII including an open reading frame homologous to the human cystic fibrosis transmembrane conductance regulator protein CFTR.</title>
        <authorList>
            <person name="Miosga T."/>
            <person name="Zimmermann F.K."/>
        </authorList>
    </citation>
    <scope>NUCLEOTIDE SEQUENCE [GENOMIC DNA] OF 443-663</scope>
    <source>
        <strain>ATCC 90840 / EAY235 / FY23</strain>
    </source>
</reference>
<reference key="4">
    <citation type="journal article" date="2001" name="Cell">
        <title>Maturation and intranuclear transport of pre-ribosomes requires Noc proteins.</title>
        <authorList>
            <person name="Milkereit P."/>
            <person name="Gadal O."/>
            <person name="Podtelejnikov A."/>
            <person name="Trumtel S."/>
            <person name="Gas N."/>
            <person name="Petfalski E."/>
            <person name="Tollervey D."/>
            <person name="Mann M."/>
            <person name="Hurt E."/>
            <person name="Tschochner H."/>
        </authorList>
    </citation>
    <scope>FUNCTION</scope>
    <scope>SUBCELLULAR LOCATION</scope>
    <scope>IDENTIFICATION BY MASS SPECTROMETRY</scope>
    <scope>INTERACTION WITH NOC2 AND 66S PRE-RIBOSOMAL PARTICLES</scope>
</reference>
<reference key="5">
    <citation type="journal article" date="2001" name="Mol. Cell">
        <title>Identification of a 60S preribosomal particle that is closely linked to nuclear export.</title>
        <authorList>
            <person name="Bassler J."/>
            <person name="Grandi P."/>
            <person name="Gadal O."/>
            <person name="Lessmann T."/>
            <person name="Petfalski E."/>
            <person name="Tollervey D."/>
            <person name="Lechner J."/>
            <person name="Hurt E."/>
        </authorList>
    </citation>
    <scope>IDENTIFICATION BY MASS SPECTROMETRY</scope>
    <scope>IDENTIFICATION IN 60S PRE-RIBOSOMAL PARTICLES</scope>
</reference>
<reference key="6">
    <citation type="journal article" date="2002" name="Cell">
        <title>Noc3p, a bHLH protein, plays an integral role in the initiation of DNA replication in budding yeast.</title>
        <authorList>
            <person name="Zhang Y."/>
            <person name="Yu Z."/>
            <person name="Fu X."/>
            <person name="Liang C."/>
        </authorList>
    </citation>
    <scope>FUNCTION</scope>
    <scope>INTERACTION WITH MCM2; MCM5 AND ORC1</scope>
</reference>
<reference key="7">
    <citation type="journal article" date="2003" name="Nature">
        <title>Global analysis of protein expression in yeast.</title>
        <authorList>
            <person name="Ghaemmaghami S."/>
            <person name="Huh W.-K."/>
            <person name="Bower K."/>
            <person name="Howson R.W."/>
            <person name="Belle A."/>
            <person name="Dephoure N."/>
            <person name="O'Shea E.K."/>
            <person name="Weissman J.S."/>
        </authorList>
    </citation>
    <scope>LEVEL OF PROTEIN EXPRESSION [LARGE SCALE ANALYSIS]</scope>
</reference>
<reference key="8">
    <citation type="journal article" date="2008" name="Mol. Cell. Proteomics">
        <title>A multidimensional chromatography technology for in-depth phosphoproteome analysis.</title>
        <authorList>
            <person name="Albuquerque C.P."/>
            <person name="Smolka M.B."/>
            <person name="Payne S.H."/>
            <person name="Bafna V."/>
            <person name="Eng J."/>
            <person name="Zhou H."/>
        </authorList>
    </citation>
    <scope>PHOSPHORYLATION [LARGE SCALE ANALYSIS] AT SER-395</scope>
    <scope>IDENTIFICATION BY MASS SPECTROMETRY [LARGE SCALE ANALYSIS]</scope>
</reference>
<reference key="9">
    <citation type="journal article" date="2009" name="Science">
        <title>Global analysis of Cdk1 substrate phosphorylation sites provides insights into evolution.</title>
        <authorList>
            <person name="Holt L.J."/>
            <person name="Tuch B.B."/>
            <person name="Villen J."/>
            <person name="Johnson A.D."/>
            <person name="Gygi S.P."/>
            <person name="Morgan D.O."/>
        </authorList>
    </citation>
    <scope>IDENTIFICATION BY MASS SPECTROMETRY [LARGE SCALE ANALYSIS]</scope>
</reference>
<proteinExistence type="evidence at protein level"/>
<sequence>MAKRNRSQFRIQERTAKKRKHEDSLLEGNVFQNAPEDMDENTIYSAKGSSWDEEEQDYEMVPRKNRSDTSNLVEGLPIKVNGKVERKLHKAQEKPKDDDEEDEDSNDSSEDDEGPNEEQEAEAKEDEPDTEEKILQLKEDIADLVTKVMEEPEENTAALGRLCKMVESKNPNTCKFSMLALVPVFKSIIPGYRIRPLTETEKKEKVSKEVSKLRNFEQALVYNYKNYVGRLQSLSKTPSNAAPIQVSLGILATQAAKELISTASHFNFRTDIFTLLLRRICKPRISTDPTSIQIIQTFETLLNEDEEGSISFEILRIFNKILKTRNFNIEESVLNMLLSLDVLHDYDPNTKLKGNVSAPKLKKKDRVHLSKKQRKARKEMQQIEEEMRNAEQAVSAEERERNQSEILKIVFTIYLNILKNNAKTLIGSVLEGLTKFGNMANFDLLGDFLEVMKELISDTEFDNLSSAEVRKALLCIVSAFSLISNTQYMKVNVDLSKFVDGLYALLPYICLDADIELSYRSLRLADPLNNEIIKPSVNVSTKAELLLKALDHVFFRSKSGTKERATAFTKRLYMCISHTPEKTSIAILKFIDKLMNRYPEISGLYSSEDRIGNGHFIMEADNPSRSNPEAATLWDNALLEKHYCPVVTKGLRSLSSRSKECSK</sequence>
<evidence type="ECO:0000255" key="1"/>
<evidence type="ECO:0000256" key="2">
    <source>
        <dbReference type="SAM" id="MobiDB-lite"/>
    </source>
</evidence>
<evidence type="ECO:0000269" key="3">
    <source>
    </source>
</evidence>
<evidence type="ECO:0000269" key="4">
    <source>
    </source>
</evidence>
<evidence type="ECO:0000269" key="5">
    <source>
    </source>
</evidence>
<evidence type="ECO:0000269" key="6">
    <source>
    </source>
</evidence>
<evidence type="ECO:0000305" key="7"/>
<evidence type="ECO:0007744" key="8">
    <source>
    </source>
</evidence>
<evidence type="ECO:0007829" key="9">
    <source>
        <dbReference type="PDB" id="7NAD"/>
    </source>
</evidence>
<evidence type="ECO:0007829" key="10">
    <source>
        <dbReference type="PDB" id="7R6K"/>
    </source>
</evidence>
<evidence type="ECO:0007829" key="11">
    <source>
        <dbReference type="PDB" id="7R72"/>
    </source>
</evidence>
<feature type="chain" id="PRO_0000173483" description="Nucleolar complex-associated protein 3">
    <location>
        <begin position="1"/>
        <end position="663"/>
    </location>
</feature>
<feature type="region of interest" description="Disordered" evidence="2">
    <location>
        <begin position="1"/>
        <end position="132"/>
    </location>
</feature>
<feature type="coiled-coil region" evidence="1">
    <location>
        <begin position="363"/>
        <end position="408"/>
    </location>
</feature>
<feature type="compositionally biased region" description="Basic and acidic residues" evidence="2">
    <location>
        <begin position="82"/>
        <end position="97"/>
    </location>
</feature>
<feature type="compositionally biased region" description="Acidic residues" evidence="2">
    <location>
        <begin position="98"/>
        <end position="130"/>
    </location>
</feature>
<feature type="modified residue" description="Phosphoserine" evidence="8">
    <location>
        <position position="395"/>
    </location>
</feature>
<feature type="helix" evidence="9">
    <location>
        <begin position="131"/>
        <end position="149"/>
    </location>
</feature>
<feature type="turn" evidence="10">
    <location>
        <begin position="152"/>
        <end position="154"/>
    </location>
</feature>
<feature type="helix" evidence="9">
    <location>
        <begin position="156"/>
        <end position="166"/>
    </location>
</feature>
<feature type="helix" evidence="9">
    <location>
        <begin position="171"/>
        <end position="188"/>
    </location>
</feature>
<feature type="helix" evidence="9">
    <location>
        <begin position="199"/>
        <end position="202"/>
    </location>
</feature>
<feature type="strand" evidence="9">
    <location>
        <begin position="208"/>
        <end position="210"/>
    </location>
</feature>
<feature type="helix" evidence="9">
    <location>
        <begin position="211"/>
        <end position="235"/>
    </location>
</feature>
<feature type="helix" evidence="9">
    <location>
        <begin position="243"/>
        <end position="259"/>
    </location>
</feature>
<feature type="turn" evidence="9">
    <location>
        <begin position="260"/>
        <end position="262"/>
    </location>
</feature>
<feature type="helix" evidence="9">
    <location>
        <begin position="263"/>
        <end position="265"/>
    </location>
</feature>
<feature type="helix" evidence="9">
    <location>
        <begin position="269"/>
        <end position="280"/>
    </location>
</feature>
<feature type="helix" evidence="9">
    <location>
        <begin position="291"/>
        <end position="304"/>
    </location>
</feature>
<feature type="strand" evidence="11">
    <location>
        <begin position="306"/>
        <end position="308"/>
    </location>
</feature>
<feature type="helix" evidence="9">
    <location>
        <begin position="309"/>
        <end position="324"/>
    </location>
</feature>
<feature type="helix" evidence="9">
    <location>
        <begin position="331"/>
        <end position="334"/>
    </location>
</feature>
<feature type="helix" evidence="9">
    <location>
        <begin position="335"/>
        <end position="339"/>
    </location>
</feature>
<feature type="helix" evidence="11">
    <location>
        <begin position="341"/>
        <end position="343"/>
    </location>
</feature>
<feature type="helix" evidence="9">
    <location>
        <begin position="363"/>
        <end position="365"/>
    </location>
</feature>
<feature type="helix" evidence="9">
    <location>
        <begin position="371"/>
        <end position="420"/>
    </location>
</feature>
<feature type="turn" evidence="10">
    <location>
        <begin position="423"/>
        <end position="425"/>
    </location>
</feature>
<feature type="helix" evidence="9">
    <location>
        <begin position="426"/>
        <end position="436"/>
    </location>
</feature>
<feature type="helix" evidence="9">
    <location>
        <begin position="437"/>
        <end position="439"/>
    </location>
</feature>
<feature type="strand" evidence="10">
    <location>
        <begin position="442"/>
        <end position="444"/>
    </location>
</feature>
<feature type="helix" evidence="10">
    <location>
        <begin position="445"/>
        <end position="462"/>
    </location>
</feature>
<feature type="strand" evidence="10">
    <location>
        <begin position="465"/>
        <end position="467"/>
    </location>
</feature>
<feature type="helix" evidence="10">
    <location>
        <begin position="468"/>
        <end position="485"/>
    </location>
</feature>
<feature type="helix" evidence="10">
    <location>
        <begin position="496"/>
        <end position="502"/>
    </location>
</feature>
<feature type="helix" evidence="10">
    <location>
        <begin position="503"/>
        <end position="505"/>
    </location>
</feature>
<feature type="helix" evidence="10">
    <location>
        <begin position="506"/>
        <end position="510"/>
    </location>
</feature>
<feature type="helix" evidence="9">
    <location>
        <begin position="520"/>
        <end position="522"/>
    </location>
</feature>
<feature type="strand" evidence="10">
    <location>
        <begin position="523"/>
        <end position="525"/>
    </location>
</feature>
<feature type="turn" evidence="9">
    <location>
        <begin position="528"/>
        <end position="532"/>
    </location>
</feature>
<feature type="strand" evidence="11">
    <location>
        <begin position="536"/>
        <end position="538"/>
    </location>
</feature>
<feature type="helix" evidence="10">
    <location>
        <begin position="542"/>
        <end position="555"/>
    </location>
</feature>
<feature type="helix" evidence="10">
    <location>
        <begin position="562"/>
        <end position="576"/>
    </location>
</feature>
<feature type="helix" evidence="10">
    <location>
        <begin position="581"/>
        <end position="597"/>
    </location>
</feature>
<feature type="helix" evidence="10">
    <location>
        <begin position="599"/>
        <end position="602"/>
    </location>
</feature>
<feature type="helix" evidence="10">
    <location>
        <begin position="603"/>
        <end position="606"/>
    </location>
</feature>
<feature type="strand" evidence="10">
    <location>
        <begin position="607"/>
        <end position="609"/>
    </location>
</feature>
<feature type="turn" evidence="10">
    <location>
        <begin position="623"/>
        <end position="625"/>
    </location>
</feature>
<feature type="helix" evidence="10">
    <location>
        <begin position="628"/>
        <end position="630"/>
    </location>
</feature>
<feature type="helix" evidence="10">
    <location>
        <begin position="634"/>
        <end position="637"/>
    </location>
</feature>
<feature type="helix" evidence="10">
    <location>
        <begin position="639"/>
        <end position="641"/>
    </location>
</feature>
<feature type="helix" evidence="10">
    <location>
        <begin position="645"/>
        <end position="661"/>
    </location>
</feature>
<accession>Q07896</accession>
<accession>D6VY04</accession>
<accession>Q92280</accession>
<organism>
    <name type="scientific">Saccharomyces cerevisiae (strain ATCC 204508 / S288c)</name>
    <name type="common">Baker's yeast</name>
    <dbReference type="NCBI Taxonomy" id="559292"/>
    <lineage>
        <taxon>Eukaryota</taxon>
        <taxon>Fungi</taxon>
        <taxon>Dikarya</taxon>
        <taxon>Ascomycota</taxon>
        <taxon>Saccharomycotina</taxon>
        <taxon>Saccharomycetes</taxon>
        <taxon>Saccharomycetales</taxon>
        <taxon>Saccharomycetaceae</taxon>
        <taxon>Saccharomyces</taxon>
    </lineage>
</organism>
<dbReference type="EMBL" id="Z73174">
    <property type="protein sequence ID" value="CAA97524.1"/>
    <property type="molecule type" value="Genomic_DNA"/>
</dbReference>
<dbReference type="EMBL" id="X91488">
    <property type="protein sequence ID" value="CAA62771.1"/>
    <property type="molecule type" value="Genomic_DNA"/>
</dbReference>
<dbReference type="EMBL" id="BK006945">
    <property type="protein sequence ID" value="DAA09320.1"/>
    <property type="molecule type" value="Genomic_DNA"/>
</dbReference>
<dbReference type="PIR" id="S64824">
    <property type="entry name" value="S64824"/>
</dbReference>
<dbReference type="RefSeq" id="NP_013102.1">
    <property type="nucleotide sequence ID" value="NM_001181889.1"/>
</dbReference>
<dbReference type="PDB" id="6ELZ">
    <property type="method" value="EM"/>
    <property type="resolution" value="3.30 A"/>
    <property type="chains" value="I=1-663"/>
</dbReference>
<dbReference type="PDB" id="6EM5">
    <property type="method" value="EM"/>
    <property type="resolution" value="4.30 A"/>
    <property type="chains" value="I=1-663"/>
</dbReference>
<dbReference type="PDB" id="7NAC">
    <property type="method" value="EM"/>
    <property type="resolution" value="3.04 A"/>
    <property type="chains" value="I=1-663"/>
</dbReference>
<dbReference type="PDB" id="7NAD">
    <property type="method" value="EM"/>
    <property type="resolution" value="3.04 A"/>
    <property type="chains" value="I=1-663"/>
</dbReference>
<dbReference type="PDB" id="7OHR">
    <property type="method" value="EM"/>
    <property type="resolution" value="4.72 A"/>
    <property type="chains" value="I=1-663"/>
</dbReference>
<dbReference type="PDB" id="7R6K">
    <property type="method" value="EM"/>
    <property type="resolution" value="3.17 A"/>
    <property type="chains" value="I=1-663"/>
</dbReference>
<dbReference type="PDB" id="7R72">
    <property type="method" value="EM"/>
    <property type="resolution" value="3.07 A"/>
    <property type="chains" value="I=1-663"/>
</dbReference>
<dbReference type="PDB" id="7R7A">
    <property type="method" value="EM"/>
    <property type="resolution" value="3.04 A"/>
    <property type="chains" value="I=1-663"/>
</dbReference>
<dbReference type="PDB" id="8V87">
    <property type="method" value="EM"/>
    <property type="resolution" value="2.66 A"/>
    <property type="chains" value="I=1-663"/>
</dbReference>
<dbReference type="PDBsum" id="6ELZ"/>
<dbReference type="PDBsum" id="6EM5"/>
<dbReference type="PDBsum" id="7NAC"/>
<dbReference type="PDBsum" id="7NAD"/>
<dbReference type="PDBsum" id="7OHR"/>
<dbReference type="PDBsum" id="7R6K"/>
<dbReference type="PDBsum" id="7R72"/>
<dbReference type="PDBsum" id="7R7A"/>
<dbReference type="PDBsum" id="8V87"/>
<dbReference type="EMDB" id="EMD-12906"/>
<dbReference type="EMDB" id="EMD-24269"/>
<dbReference type="EMDB" id="EMD-24280"/>
<dbReference type="EMDB" id="EMD-24290"/>
<dbReference type="EMDB" id="EMD-24296"/>
<dbReference type="EMDB" id="EMD-43027"/>
<dbReference type="SMR" id="Q07896"/>
<dbReference type="BioGRID" id="31275">
    <property type="interactions" value="308"/>
</dbReference>
<dbReference type="ComplexPortal" id="CPX-1734">
    <property type="entry name" value="NOC2-NOC3 pre-ribosome maturation complex"/>
</dbReference>
<dbReference type="DIP" id="DIP-4839N"/>
<dbReference type="FunCoup" id="Q07896">
    <property type="interactions" value="1308"/>
</dbReference>
<dbReference type="IntAct" id="Q07896">
    <property type="interactions" value="58"/>
</dbReference>
<dbReference type="MINT" id="Q07896"/>
<dbReference type="STRING" id="4932.YLR002C"/>
<dbReference type="iPTMnet" id="Q07896"/>
<dbReference type="PaxDb" id="4932-YLR002C"/>
<dbReference type="PeptideAtlas" id="Q07896"/>
<dbReference type="EnsemblFungi" id="YLR002C_mRNA">
    <property type="protein sequence ID" value="YLR002C"/>
    <property type="gene ID" value="YLR002C"/>
</dbReference>
<dbReference type="GeneID" id="850688"/>
<dbReference type="KEGG" id="sce:YLR002C"/>
<dbReference type="AGR" id="SGD:S000003992"/>
<dbReference type="SGD" id="S000003992">
    <property type="gene designation" value="NOC3"/>
</dbReference>
<dbReference type="VEuPathDB" id="FungiDB:YLR002C"/>
<dbReference type="eggNOG" id="KOG2153">
    <property type="taxonomic scope" value="Eukaryota"/>
</dbReference>
<dbReference type="GeneTree" id="ENSGT00390000008540"/>
<dbReference type="HOGENOM" id="CLU_012441_3_1_1"/>
<dbReference type="InParanoid" id="Q07896"/>
<dbReference type="OMA" id="FGNMANF"/>
<dbReference type="OrthoDB" id="10263597at2759"/>
<dbReference type="BioCyc" id="YEAST:G3O-32163-MONOMER"/>
<dbReference type="BioGRID-ORCS" id="850688">
    <property type="hits" value="2 hits in 10 CRISPR screens"/>
</dbReference>
<dbReference type="CD-CODE" id="BDAE0F88">
    <property type="entry name" value="Nucleolus"/>
</dbReference>
<dbReference type="PRO" id="PR:Q07896"/>
<dbReference type="Proteomes" id="UP000002311">
    <property type="component" value="Chromosome XII"/>
</dbReference>
<dbReference type="RNAct" id="Q07896">
    <property type="molecule type" value="protein"/>
</dbReference>
<dbReference type="GO" id="GO:0030691">
    <property type="term" value="C:Noc2p-Noc3p complex"/>
    <property type="evidence" value="ECO:0000314"/>
    <property type="project" value="SGD"/>
</dbReference>
<dbReference type="GO" id="GO:0005656">
    <property type="term" value="C:nuclear pre-replicative complex"/>
    <property type="evidence" value="ECO:0000314"/>
    <property type="project" value="SGD"/>
</dbReference>
<dbReference type="GO" id="GO:0005730">
    <property type="term" value="C:nucleolus"/>
    <property type="evidence" value="ECO:0000314"/>
    <property type="project" value="SGD"/>
</dbReference>
<dbReference type="GO" id="GO:0005654">
    <property type="term" value="C:nucleoplasm"/>
    <property type="evidence" value="ECO:0000314"/>
    <property type="project" value="ComplexPortal"/>
</dbReference>
<dbReference type="GO" id="GO:0005634">
    <property type="term" value="C:nucleus"/>
    <property type="evidence" value="ECO:0000314"/>
    <property type="project" value="SGD"/>
</dbReference>
<dbReference type="GO" id="GO:0003682">
    <property type="term" value="F:chromatin binding"/>
    <property type="evidence" value="ECO:0000314"/>
    <property type="project" value="SGD"/>
</dbReference>
<dbReference type="GO" id="GO:0051301">
    <property type="term" value="P:cell division"/>
    <property type="evidence" value="ECO:0007669"/>
    <property type="project" value="UniProtKB-KW"/>
</dbReference>
<dbReference type="GO" id="GO:0006270">
    <property type="term" value="P:DNA replication initiation"/>
    <property type="evidence" value="ECO:0000314"/>
    <property type="project" value="SGD"/>
</dbReference>
<dbReference type="GO" id="GO:0006267">
    <property type="term" value="P:pre-replicative complex assembly involved in nuclear cell cycle DNA replication"/>
    <property type="evidence" value="ECO:0000315"/>
    <property type="project" value="SGD"/>
</dbReference>
<dbReference type="GO" id="GO:0042273">
    <property type="term" value="P:ribosomal large subunit biogenesis"/>
    <property type="evidence" value="ECO:0000314"/>
    <property type="project" value="ComplexPortal"/>
</dbReference>
<dbReference type="GO" id="GO:0006364">
    <property type="term" value="P:rRNA processing"/>
    <property type="evidence" value="ECO:0000314"/>
    <property type="project" value="SGD"/>
</dbReference>
<dbReference type="InterPro" id="IPR016024">
    <property type="entry name" value="ARM-type_fold"/>
</dbReference>
<dbReference type="InterPro" id="IPR005612">
    <property type="entry name" value="CCAAT-binding_factor"/>
</dbReference>
<dbReference type="InterPro" id="IPR011501">
    <property type="entry name" value="Noc3_N"/>
</dbReference>
<dbReference type="InterPro" id="IPR016903">
    <property type="entry name" value="Nucleolar_cplx-assoc_3"/>
</dbReference>
<dbReference type="PANTHER" id="PTHR14428">
    <property type="entry name" value="NUCLEOLAR COMPLEX PROTEIN 3"/>
    <property type="match status" value="1"/>
</dbReference>
<dbReference type="PANTHER" id="PTHR14428:SF5">
    <property type="entry name" value="NUCLEOLAR COMPLEX PROTEIN 3 HOMOLOG"/>
    <property type="match status" value="1"/>
</dbReference>
<dbReference type="Pfam" id="PF03914">
    <property type="entry name" value="CBF"/>
    <property type="match status" value="1"/>
</dbReference>
<dbReference type="Pfam" id="PF07540">
    <property type="entry name" value="NOC3p"/>
    <property type="match status" value="1"/>
</dbReference>
<dbReference type="PIRSF" id="PIRSF028977">
    <property type="entry name" value="Nucleolar_complex_p3"/>
    <property type="match status" value="1"/>
</dbReference>
<dbReference type="SUPFAM" id="SSF48371">
    <property type="entry name" value="ARM repeat"/>
    <property type="match status" value="1"/>
</dbReference>
<name>NOC3_YEAST</name>
<keyword id="KW-0002">3D-structure</keyword>
<keyword id="KW-0131">Cell cycle</keyword>
<keyword id="KW-0132">Cell division</keyword>
<keyword id="KW-0175">Coiled coil</keyword>
<keyword id="KW-0235">DNA replication</keyword>
<keyword id="KW-0539">Nucleus</keyword>
<keyword id="KW-0597">Phosphoprotein</keyword>
<keyword id="KW-1185">Reference proteome</keyword>
<keyword id="KW-0690">Ribosome biogenesis</keyword>
<comment type="function">
    <text evidence="3 5">Required for synthesis of 60S ribosomal subunits and the transport of pre-ribosomes from the nucleoplasm to the cytoplasm. Also required for initiation of DNA replication. May function downstream of the origin recognition complex (ORC complex) in the loading of CDC6 and the minichromosome maintenance complex (MCM complex) onto chromatin during the G1 phase of the cell cycle. Essential for growth.</text>
</comment>
<comment type="subunit">
    <text evidence="3 4 5">Forms a heterodimer with NOC2. This complex may be associated with pre-ribosomal particles. Also interacts with MCM2, MCM5 and ORC1.</text>
</comment>
<comment type="interaction">
    <interactant intactId="EBI-36093">
        <id>Q07896</id>
    </interactant>
    <interactant intactId="EBI-6289">
        <id>P36049</id>
        <label>EBP2</label>
    </interactant>
    <organismsDiffer>false</organismsDiffer>
    <experiments>3</experiments>
</comment>
<comment type="interaction">
    <interactant intactId="EBI-36093">
        <id>Q07896</id>
    </interactant>
    <interactant intactId="EBI-10937">
        <id>P10962</id>
        <label>MAK16</label>
    </interactant>
    <organismsDiffer>false</organismsDiffer>
    <experiments>3</experiments>
</comment>
<comment type="interaction">
    <interactant intactId="EBI-36093">
        <id>Q07896</id>
    </interactant>
    <interactant intactId="EBI-29259">
        <id>P39744</id>
        <label>NOC2</label>
    </interactant>
    <organismsDiffer>false</organismsDiffer>
    <experiments>8</experiments>
</comment>
<comment type="interaction">
    <interactant intactId="EBI-36093">
        <id>Q07896</id>
    </interactant>
    <interactant intactId="EBI-17814">
        <id>P25582</id>
        <label>SPB1</label>
    </interactant>
    <organismsDiffer>false</organismsDiffer>
    <experiments>4</experiments>
</comment>
<comment type="subcellular location">
    <subcellularLocation>
        <location evidence="3">Nucleus</location>
        <location evidence="3">Nucleolus</location>
    </subcellularLocation>
</comment>
<comment type="miscellaneous">
    <text evidence="6">Present with 11700 molecules/cell in log phase SD medium.</text>
</comment>
<comment type="similarity">
    <text evidence="7">Belongs to the CBF/MAK21 family.</text>
</comment>